<keyword id="KW-0067">ATP-binding</keyword>
<keyword id="KW-0963">Cytoplasm</keyword>
<keyword id="KW-0460">Magnesium</keyword>
<keyword id="KW-0479">Metal-binding</keyword>
<keyword id="KW-0547">Nucleotide-binding</keyword>
<keyword id="KW-0554">One-carbon metabolism</keyword>
<keyword id="KW-0630">Potassium</keyword>
<keyword id="KW-0808">Transferase</keyword>
<protein>
    <recommendedName>
        <fullName evidence="1">S-adenosylmethionine synthase</fullName>
        <shortName evidence="1">AdoMet synthase</shortName>
        <ecNumber evidence="1">2.5.1.6</ecNumber>
    </recommendedName>
    <alternativeName>
        <fullName evidence="1">MAT</fullName>
    </alternativeName>
    <alternativeName>
        <fullName evidence="1">Methionine adenosyltransferase</fullName>
    </alternativeName>
</protein>
<feature type="chain" id="PRO_1000093042" description="S-adenosylmethionine synthase">
    <location>
        <begin position="1"/>
        <end position="393"/>
    </location>
</feature>
<feature type="region of interest" description="Flexible loop" evidence="1">
    <location>
        <begin position="100"/>
        <end position="110"/>
    </location>
</feature>
<feature type="binding site" description="in other chain" evidence="1">
    <location>
        <position position="16"/>
    </location>
    <ligand>
        <name>ATP</name>
        <dbReference type="ChEBI" id="CHEBI:30616"/>
        <note>ligand shared between two neighboring subunits</note>
    </ligand>
</feature>
<feature type="binding site" evidence="1">
    <location>
        <position position="18"/>
    </location>
    <ligand>
        <name>Mg(2+)</name>
        <dbReference type="ChEBI" id="CHEBI:18420"/>
    </ligand>
</feature>
<feature type="binding site" evidence="1">
    <location>
        <position position="44"/>
    </location>
    <ligand>
        <name>K(+)</name>
        <dbReference type="ChEBI" id="CHEBI:29103"/>
    </ligand>
</feature>
<feature type="binding site" description="in other chain" evidence="1">
    <location>
        <position position="57"/>
    </location>
    <ligand>
        <name>L-methionine</name>
        <dbReference type="ChEBI" id="CHEBI:57844"/>
        <note>ligand shared between two neighboring subunits</note>
    </ligand>
</feature>
<feature type="binding site" description="in other chain" evidence="1">
    <location>
        <position position="100"/>
    </location>
    <ligand>
        <name>L-methionine</name>
        <dbReference type="ChEBI" id="CHEBI:57844"/>
        <note>ligand shared between two neighboring subunits</note>
    </ligand>
</feature>
<feature type="binding site" description="in other chain" evidence="1">
    <location>
        <begin position="165"/>
        <end position="167"/>
    </location>
    <ligand>
        <name>ATP</name>
        <dbReference type="ChEBI" id="CHEBI:30616"/>
        <note>ligand shared between two neighboring subunits</note>
    </ligand>
</feature>
<feature type="binding site" description="in other chain" evidence="1">
    <location>
        <begin position="231"/>
        <end position="232"/>
    </location>
    <ligand>
        <name>ATP</name>
        <dbReference type="ChEBI" id="CHEBI:30616"/>
        <note>ligand shared between two neighboring subunits</note>
    </ligand>
</feature>
<feature type="binding site" evidence="1">
    <location>
        <position position="240"/>
    </location>
    <ligand>
        <name>ATP</name>
        <dbReference type="ChEBI" id="CHEBI:30616"/>
        <note>ligand shared between two neighboring subunits</note>
    </ligand>
</feature>
<feature type="binding site" evidence="1">
    <location>
        <position position="240"/>
    </location>
    <ligand>
        <name>L-methionine</name>
        <dbReference type="ChEBI" id="CHEBI:57844"/>
        <note>ligand shared between two neighboring subunits</note>
    </ligand>
</feature>
<feature type="binding site" description="in other chain" evidence="1">
    <location>
        <begin position="246"/>
        <end position="247"/>
    </location>
    <ligand>
        <name>ATP</name>
        <dbReference type="ChEBI" id="CHEBI:30616"/>
        <note>ligand shared between two neighboring subunits</note>
    </ligand>
</feature>
<feature type="binding site" evidence="1">
    <location>
        <position position="267"/>
    </location>
    <ligand>
        <name>ATP</name>
        <dbReference type="ChEBI" id="CHEBI:30616"/>
        <note>ligand shared between two neighboring subunits</note>
    </ligand>
</feature>
<feature type="binding site" description="in other chain" evidence="1">
    <location>
        <position position="271"/>
    </location>
    <ligand>
        <name>L-methionine</name>
        <dbReference type="ChEBI" id="CHEBI:57844"/>
        <note>ligand shared between two neighboring subunits</note>
    </ligand>
</feature>
<proteinExistence type="inferred from homology"/>
<gene>
    <name evidence="1" type="primary">metK</name>
    <name type="ordered locus">CbuG_2040</name>
</gene>
<reference key="1">
    <citation type="journal article" date="2009" name="Infect. Immun.">
        <title>Comparative genomics reveal extensive transposon-mediated genomic plasticity and diversity among potential effector proteins within the genus Coxiella.</title>
        <authorList>
            <person name="Beare P.A."/>
            <person name="Unsworth N."/>
            <person name="Andoh M."/>
            <person name="Voth D.E."/>
            <person name="Omsland A."/>
            <person name="Gilk S.D."/>
            <person name="Williams K.P."/>
            <person name="Sobral B.W."/>
            <person name="Kupko J.J. III"/>
            <person name="Porcella S.F."/>
            <person name="Samuel J.E."/>
            <person name="Heinzen R.A."/>
        </authorList>
    </citation>
    <scope>NUCLEOTIDE SEQUENCE [LARGE SCALE GENOMIC DNA]</scope>
    <source>
        <strain>CbuG_Q212</strain>
    </source>
</reference>
<comment type="function">
    <text evidence="1">Catalyzes the formation of S-adenosylmethionine (AdoMet) from methionine and ATP. The overall synthetic reaction is composed of two sequential steps, AdoMet formation and the subsequent tripolyphosphate hydrolysis which occurs prior to release of AdoMet from the enzyme.</text>
</comment>
<comment type="catalytic activity">
    <reaction evidence="1">
        <text>L-methionine + ATP + H2O = S-adenosyl-L-methionine + phosphate + diphosphate</text>
        <dbReference type="Rhea" id="RHEA:21080"/>
        <dbReference type="ChEBI" id="CHEBI:15377"/>
        <dbReference type="ChEBI" id="CHEBI:30616"/>
        <dbReference type="ChEBI" id="CHEBI:33019"/>
        <dbReference type="ChEBI" id="CHEBI:43474"/>
        <dbReference type="ChEBI" id="CHEBI:57844"/>
        <dbReference type="ChEBI" id="CHEBI:59789"/>
        <dbReference type="EC" id="2.5.1.6"/>
    </reaction>
</comment>
<comment type="cofactor">
    <cofactor evidence="1">
        <name>Mg(2+)</name>
        <dbReference type="ChEBI" id="CHEBI:18420"/>
    </cofactor>
    <text evidence="1">Binds 2 divalent ions per subunit.</text>
</comment>
<comment type="cofactor">
    <cofactor evidence="1">
        <name>K(+)</name>
        <dbReference type="ChEBI" id="CHEBI:29103"/>
    </cofactor>
    <text evidence="1">Binds 1 potassium ion per subunit.</text>
</comment>
<comment type="pathway">
    <text evidence="1">Amino-acid biosynthesis; S-adenosyl-L-methionine biosynthesis; S-adenosyl-L-methionine from L-methionine: step 1/1.</text>
</comment>
<comment type="subunit">
    <text evidence="1">Homotetramer; dimer of dimers.</text>
</comment>
<comment type="subcellular location">
    <subcellularLocation>
        <location evidence="1">Cytoplasm</location>
    </subcellularLocation>
</comment>
<comment type="similarity">
    <text evidence="1">Belongs to the AdoMet synthase family.</text>
</comment>
<name>METK_COXB2</name>
<dbReference type="EC" id="2.5.1.6" evidence="1"/>
<dbReference type="EMBL" id="CP001019">
    <property type="protein sequence ID" value="ACJ19281.1"/>
    <property type="molecule type" value="Genomic_DNA"/>
</dbReference>
<dbReference type="RefSeq" id="WP_005772164.1">
    <property type="nucleotide sequence ID" value="NC_011527.1"/>
</dbReference>
<dbReference type="SMR" id="B6J3Q9"/>
<dbReference type="KEGG" id="cbg:CbuG_2040"/>
<dbReference type="HOGENOM" id="CLU_041802_1_1_6"/>
<dbReference type="UniPathway" id="UPA00315">
    <property type="reaction ID" value="UER00080"/>
</dbReference>
<dbReference type="GO" id="GO:0005737">
    <property type="term" value="C:cytoplasm"/>
    <property type="evidence" value="ECO:0007669"/>
    <property type="project" value="UniProtKB-SubCell"/>
</dbReference>
<dbReference type="GO" id="GO:0005524">
    <property type="term" value="F:ATP binding"/>
    <property type="evidence" value="ECO:0007669"/>
    <property type="project" value="UniProtKB-UniRule"/>
</dbReference>
<dbReference type="GO" id="GO:0000287">
    <property type="term" value="F:magnesium ion binding"/>
    <property type="evidence" value="ECO:0007669"/>
    <property type="project" value="UniProtKB-UniRule"/>
</dbReference>
<dbReference type="GO" id="GO:0004478">
    <property type="term" value="F:methionine adenosyltransferase activity"/>
    <property type="evidence" value="ECO:0007669"/>
    <property type="project" value="UniProtKB-UniRule"/>
</dbReference>
<dbReference type="GO" id="GO:0006730">
    <property type="term" value="P:one-carbon metabolic process"/>
    <property type="evidence" value="ECO:0007669"/>
    <property type="project" value="UniProtKB-KW"/>
</dbReference>
<dbReference type="GO" id="GO:0006556">
    <property type="term" value="P:S-adenosylmethionine biosynthetic process"/>
    <property type="evidence" value="ECO:0007669"/>
    <property type="project" value="UniProtKB-UniRule"/>
</dbReference>
<dbReference type="CDD" id="cd18079">
    <property type="entry name" value="S-AdoMet_synt"/>
    <property type="match status" value="1"/>
</dbReference>
<dbReference type="FunFam" id="3.30.300.10:FF:000003">
    <property type="entry name" value="S-adenosylmethionine synthase"/>
    <property type="match status" value="1"/>
</dbReference>
<dbReference type="FunFam" id="3.30.300.10:FF:000004">
    <property type="entry name" value="S-adenosylmethionine synthase"/>
    <property type="match status" value="1"/>
</dbReference>
<dbReference type="Gene3D" id="3.30.300.10">
    <property type="match status" value="3"/>
</dbReference>
<dbReference type="HAMAP" id="MF_00086">
    <property type="entry name" value="S_AdoMet_synth1"/>
    <property type="match status" value="1"/>
</dbReference>
<dbReference type="InterPro" id="IPR022631">
    <property type="entry name" value="ADOMET_SYNTHASE_CS"/>
</dbReference>
<dbReference type="InterPro" id="IPR022630">
    <property type="entry name" value="S-AdoMet_synt_C"/>
</dbReference>
<dbReference type="InterPro" id="IPR022629">
    <property type="entry name" value="S-AdoMet_synt_central"/>
</dbReference>
<dbReference type="InterPro" id="IPR022628">
    <property type="entry name" value="S-AdoMet_synt_N"/>
</dbReference>
<dbReference type="InterPro" id="IPR002133">
    <property type="entry name" value="S-AdoMet_synthetase"/>
</dbReference>
<dbReference type="InterPro" id="IPR022636">
    <property type="entry name" value="S-AdoMet_synthetase_sfam"/>
</dbReference>
<dbReference type="NCBIfam" id="TIGR01034">
    <property type="entry name" value="metK"/>
    <property type="match status" value="1"/>
</dbReference>
<dbReference type="PANTHER" id="PTHR11964">
    <property type="entry name" value="S-ADENOSYLMETHIONINE SYNTHETASE"/>
    <property type="match status" value="1"/>
</dbReference>
<dbReference type="Pfam" id="PF02773">
    <property type="entry name" value="S-AdoMet_synt_C"/>
    <property type="match status" value="1"/>
</dbReference>
<dbReference type="Pfam" id="PF02772">
    <property type="entry name" value="S-AdoMet_synt_M"/>
    <property type="match status" value="1"/>
</dbReference>
<dbReference type="Pfam" id="PF00438">
    <property type="entry name" value="S-AdoMet_synt_N"/>
    <property type="match status" value="1"/>
</dbReference>
<dbReference type="PIRSF" id="PIRSF000497">
    <property type="entry name" value="MAT"/>
    <property type="match status" value="1"/>
</dbReference>
<dbReference type="SUPFAM" id="SSF55973">
    <property type="entry name" value="S-adenosylmethionine synthetase"/>
    <property type="match status" value="3"/>
</dbReference>
<dbReference type="PROSITE" id="PS00376">
    <property type="entry name" value="ADOMET_SYNTHASE_1"/>
    <property type="match status" value="1"/>
</dbReference>
<dbReference type="PROSITE" id="PS00377">
    <property type="entry name" value="ADOMET_SYNTHASE_2"/>
    <property type="match status" value="1"/>
</dbReference>
<sequence>MTHTTLFTSESVSEGHPDKVADQISDAVLDALIGQDPNCRVACEAVVKSGMVFVAGEITTNAWADVEQITRNTVLQIGYNDPHLGFDGETCAVVTAIGKQSPDIVMGVDGREDQELGAGDQGLMFGYASRETDVFMPAPITYAHRLVRQQALLRKNGRLPWLRPDAKSQVTLRYENGKPVAADCIVLSTQHSPEISQESLREAVIDEIIKPIMPPHWLDKHTRFLVNPTGRFVIGGPVGDCGLTGRKIIVDTYGGMARHGGGCFSGKDPSKVDRSGAYAARYVAKNIVAGGLADRCEIQVSYAIGVAEPTSISVETFGTGKIDEVRIQQLIKEHFDLRPGKIIEELNLLRSIYKATATYGHFGREEPEFTWERTDKAEILREAAGLAAANVTN</sequence>
<organism>
    <name type="scientific">Coxiella burnetii (strain CbuG_Q212)</name>
    <name type="common">Coxiella burnetii (strain Q212)</name>
    <dbReference type="NCBI Taxonomy" id="434923"/>
    <lineage>
        <taxon>Bacteria</taxon>
        <taxon>Pseudomonadati</taxon>
        <taxon>Pseudomonadota</taxon>
        <taxon>Gammaproteobacteria</taxon>
        <taxon>Legionellales</taxon>
        <taxon>Coxiellaceae</taxon>
        <taxon>Coxiella</taxon>
    </lineage>
</organism>
<evidence type="ECO:0000255" key="1">
    <source>
        <dbReference type="HAMAP-Rule" id="MF_00086"/>
    </source>
</evidence>
<accession>B6J3Q9</accession>